<comment type="similarity">
    <text evidence="3">Belongs to the WD repeat GAD-1 family.</text>
</comment>
<reference key="1">
    <citation type="submission" date="2005-11" db="EMBL/GenBank/DDBJ databases">
        <authorList>
            <consortium name="NIH - Mammalian Gene Collection (MGC) project"/>
        </authorList>
    </citation>
    <scope>NUCLEOTIDE SEQUENCE [LARGE SCALE MRNA]</scope>
    <source>
        <strain>Crossbred X Angus</strain>
        <tissue>Liver</tissue>
    </source>
</reference>
<organism>
    <name type="scientific">Bos taurus</name>
    <name type="common">Bovine</name>
    <dbReference type="NCBI Taxonomy" id="9913"/>
    <lineage>
        <taxon>Eukaryota</taxon>
        <taxon>Metazoa</taxon>
        <taxon>Chordata</taxon>
        <taxon>Craniata</taxon>
        <taxon>Vertebrata</taxon>
        <taxon>Euteleostomi</taxon>
        <taxon>Mammalia</taxon>
        <taxon>Eutheria</taxon>
        <taxon>Laurasiatheria</taxon>
        <taxon>Artiodactyla</taxon>
        <taxon>Ruminantia</taxon>
        <taxon>Pecora</taxon>
        <taxon>Bovidae</taxon>
        <taxon>Bovinae</taxon>
        <taxon>Bos</taxon>
    </lineage>
</organism>
<dbReference type="EMBL" id="BC109667">
    <property type="protein sequence ID" value="AAI09668.1"/>
    <property type="molecule type" value="mRNA"/>
</dbReference>
<dbReference type="RefSeq" id="NP_001069706.1">
    <property type="nucleotide sequence ID" value="NM_001076238.2"/>
</dbReference>
<dbReference type="SMR" id="Q32LB0"/>
<dbReference type="FunCoup" id="Q32LB0">
    <property type="interactions" value="5206"/>
</dbReference>
<dbReference type="STRING" id="9913.ENSBTAP00000068018"/>
<dbReference type="PaxDb" id="9913-ENSBTAP00000044228"/>
<dbReference type="GeneID" id="540724"/>
<dbReference type="KEGG" id="bta:540724"/>
<dbReference type="CTD" id="55100"/>
<dbReference type="eggNOG" id="KOG0772">
    <property type="taxonomic scope" value="Eukaryota"/>
</dbReference>
<dbReference type="InParanoid" id="Q32LB0"/>
<dbReference type="OrthoDB" id="10264376at2759"/>
<dbReference type="Proteomes" id="UP000009136">
    <property type="component" value="Unplaced"/>
</dbReference>
<dbReference type="GO" id="GO:0005634">
    <property type="term" value="C:nucleus"/>
    <property type="evidence" value="ECO:0000318"/>
    <property type="project" value="GO_Central"/>
</dbReference>
<dbReference type="GO" id="GO:0035861">
    <property type="term" value="C:site of double-strand break"/>
    <property type="evidence" value="ECO:0000318"/>
    <property type="project" value="GO_Central"/>
</dbReference>
<dbReference type="FunFam" id="2.130.10.10:FF:000501">
    <property type="entry name" value="WD repeat domain 70"/>
    <property type="match status" value="1"/>
</dbReference>
<dbReference type="FunFam" id="2.130.10.10:FF:000294">
    <property type="entry name" value="WD repeat-containing protein 70"/>
    <property type="match status" value="1"/>
</dbReference>
<dbReference type="Gene3D" id="2.130.10.10">
    <property type="entry name" value="YVTN repeat-like/Quinoprotein amine dehydrogenase"/>
    <property type="match status" value="2"/>
</dbReference>
<dbReference type="InterPro" id="IPR015943">
    <property type="entry name" value="WD40/YVTN_repeat-like_dom_sf"/>
</dbReference>
<dbReference type="InterPro" id="IPR036322">
    <property type="entry name" value="WD40_repeat_dom_sf"/>
</dbReference>
<dbReference type="InterPro" id="IPR001680">
    <property type="entry name" value="WD40_rpt"/>
</dbReference>
<dbReference type="InterPro" id="IPR051858">
    <property type="entry name" value="WD_repeat_GAD-1"/>
</dbReference>
<dbReference type="PANTHER" id="PTHR16017">
    <property type="entry name" value="GASTRULATION DEFECTIVE PROTEIN 1-RELATED"/>
    <property type="match status" value="1"/>
</dbReference>
<dbReference type="PANTHER" id="PTHR16017:SF0">
    <property type="entry name" value="WD REPEAT-CONTAINING PROTEIN 70"/>
    <property type="match status" value="1"/>
</dbReference>
<dbReference type="Pfam" id="PF00400">
    <property type="entry name" value="WD40"/>
    <property type="match status" value="3"/>
</dbReference>
<dbReference type="SMART" id="SM00320">
    <property type="entry name" value="WD40"/>
    <property type="match status" value="6"/>
</dbReference>
<dbReference type="SUPFAM" id="SSF50978">
    <property type="entry name" value="WD40 repeat-like"/>
    <property type="match status" value="1"/>
</dbReference>
<dbReference type="PROSITE" id="PS00678">
    <property type="entry name" value="WD_REPEATS_1"/>
    <property type="match status" value="1"/>
</dbReference>
<dbReference type="PROSITE" id="PS50082">
    <property type="entry name" value="WD_REPEATS_2"/>
    <property type="match status" value="3"/>
</dbReference>
<dbReference type="PROSITE" id="PS50294">
    <property type="entry name" value="WD_REPEATS_REGION"/>
    <property type="match status" value="1"/>
</dbReference>
<accession>Q32LB0</accession>
<name>WDR70_BOVIN</name>
<keyword id="KW-0007">Acetylation</keyword>
<keyword id="KW-1017">Isopeptide bond</keyword>
<keyword id="KW-0597">Phosphoprotein</keyword>
<keyword id="KW-1185">Reference proteome</keyword>
<keyword id="KW-0677">Repeat</keyword>
<keyword id="KW-0832">Ubl conjugation</keyword>
<keyword id="KW-0853">WD repeat</keyword>
<sequence>MERPGPSDGSDASGPDPQLAVTMGFTGFGKKARTFDLEAMFEQTRRTAVERSRKTLEAREREEEMNREKELRRQNEDLEPTSSGSNVARACSKSSSRDTSSSESDESSDSSDDELIGPPLPLKMVEEPVNPMEEGVLGPLPPPLAEDVEEEDDDDGDSEEEENPVRKIPDSHEITIKHGTKTVSALGLDPSGARLVTGGYDYDVKFWDFAGMDASFKAFRSLQPCECHQIKSLQYSNTGDMILVVSGSSQAKVIDRDGFEVMECIKGDQYIVDMANTKGHTAMLHTGSWHPKIKGEFMTCSNDATVRTWEVENPKKQKSVFKPRTMQGKKVIPTTCTYSRDGSLIAAACQNGSIQIWDRNLTVHPKFHYKQAHDPGTDTSCVTFSYDGTVLASRGGDDTLKLWDIRQFNKPLFSASGLPTMFPMTDCCFSPDDKLIVTGTSVQRGCGSGKLVFFERRTFQRVYEIDITDASVVRCLWHPKLNQIMVGTGNGLAKVYYDPNKSQRGAKLCVVKTQRKAKQAETLTQDYIITPHALPMFREPRQRSTRKQLEKDRLDPLKSHKPEPPVAGPGRGGRVGTHGGTLSSYIVKNIALDKTDDSNPREAILRHAKAAEDNPYWVSPAYSKTQPKTMFAQVESDDEETKNEPEWKKRKI</sequence>
<evidence type="ECO:0000250" key="1">
    <source>
        <dbReference type="UniProtKB" id="Q9NW82"/>
    </source>
</evidence>
<evidence type="ECO:0000256" key="2">
    <source>
        <dbReference type="SAM" id="MobiDB-lite"/>
    </source>
</evidence>
<evidence type="ECO:0000305" key="3"/>
<proteinExistence type="evidence at transcript level"/>
<gene>
    <name type="primary">WDR70</name>
</gene>
<protein>
    <recommendedName>
        <fullName>WD repeat-containing protein 70</fullName>
    </recommendedName>
</protein>
<feature type="chain" id="PRO_0000305143" description="WD repeat-containing protein 70">
    <location>
        <begin position="1"/>
        <end position="652"/>
    </location>
</feature>
<feature type="repeat" description="WD 1">
    <location>
        <begin position="178"/>
        <end position="217"/>
    </location>
</feature>
<feature type="repeat" description="WD 2">
    <location>
        <begin position="225"/>
        <end position="266"/>
    </location>
</feature>
<feature type="repeat" description="WD 3">
    <location>
        <begin position="279"/>
        <end position="319"/>
    </location>
</feature>
<feature type="repeat" description="WD 4">
    <location>
        <begin position="328"/>
        <end position="367"/>
    </location>
</feature>
<feature type="repeat" description="WD 5">
    <location>
        <begin position="374"/>
        <end position="413"/>
    </location>
</feature>
<feature type="repeat" description="WD 6">
    <location>
        <begin position="419"/>
        <end position="464"/>
    </location>
</feature>
<feature type="repeat" description="WD 7">
    <location>
        <begin position="467"/>
        <end position="506"/>
    </location>
</feature>
<feature type="region of interest" description="Disordered" evidence="2">
    <location>
        <begin position="1"/>
        <end position="22"/>
    </location>
</feature>
<feature type="region of interest" description="Disordered" evidence="2">
    <location>
        <begin position="45"/>
        <end position="171"/>
    </location>
</feature>
<feature type="region of interest" description="Disordered" evidence="2">
    <location>
        <begin position="538"/>
        <end position="577"/>
    </location>
</feature>
<feature type="region of interest" description="Disordered" evidence="2">
    <location>
        <begin position="629"/>
        <end position="652"/>
    </location>
</feature>
<feature type="compositionally biased region" description="Basic and acidic residues" evidence="2">
    <location>
        <begin position="45"/>
        <end position="76"/>
    </location>
</feature>
<feature type="compositionally biased region" description="Low complexity" evidence="2">
    <location>
        <begin position="92"/>
        <end position="102"/>
    </location>
</feature>
<feature type="compositionally biased region" description="Acidic residues" evidence="2">
    <location>
        <begin position="103"/>
        <end position="115"/>
    </location>
</feature>
<feature type="compositionally biased region" description="Acidic residues" evidence="2">
    <location>
        <begin position="146"/>
        <end position="162"/>
    </location>
</feature>
<feature type="compositionally biased region" description="Basic and acidic residues" evidence="2">
    <location>
        <begin position="538"/>
        <end position="563"/>
    </location>
</feature>
<feature type="compositionally biased region" description="Basic and acidic residues" evidence="2">
    <location>
        <begin position="642"/>
        <end position="652"/>
    </location>
</feature>
<feature type="modified residue" description="N6-acetyllysine" evidence="1">
    <location>
        <position position="450"/>
    </location>
</feature>
<feature type="modified residue" description="Phosphothreonine" evidence="1">
    <location>
        <position position="577"/>
    </location>
</feature>
<feature type="modified residue" description="Phosphoserine" evidence="1">
    <location>
        <position position="619"/>
    </location>
</feature>
<feature type="modified residue" description="Phosphoserine" evidence="1">
    <location>
        <position position="636"/>
    </location>
</feature>
<feature type="cross-link" description="Glycyl lysine isopeptide (Lys-Gly) (interchain with G-Cter in SUMO2)" evidence="1">
    <location>
        <position position="294"/>
    </location>
</feature>
<feature type="cross-link" description="Glycyl lysine isopeptide (Lys-Gly) (interchain with G-Cter in SUMO2)" evidence="1">
    <location>
        <position position="588"/>
    </location>
</feature>
<feature type="cross-link" description="Glycyl lysine isopeptide (Lys-Gly) (interchain with G-Cter in SUMO2)" evidence="1">
    <location>
        <position position="594"/>
    </location>
</feature>